<dbReference type="EMBL" id="AF513816">
    <property type="protein sequence ID" value="AAM48246.1"/>
    <property type="molecule type" value="mRNA"/>
</dbReference>
<dbReference type="EMBL" id="AY227449">
    <property type="protein sequence ID" value="AAO72308.1"/>
    <property type="molecule type" value="mRNA"/>
</dbReference>
<dbReference type="EMBL" id="AK027592">
    <property type="protein sequence ID" value="BAB55217.1"/>
    <property type="molecule type" value="mRNA"/>
</dbReference>
<dbReference type="EMBL" id="AL832265">
    <property type="protein sequence ID" value="CAI46159.1"/>
    <property type="molecule type" value="mRNA"/>
</dbReference>
<dbReference type="EMBL" id="AC074138">
    <property type="status" value="NOT_ANNOTATED_CDS"/>
    <property type="molecule type" value="Genomic_DNA"/>
</dbReference>
<dbReference type="EMBL" id="AC092295">
    <property type="status" value="NOT_ANNOTATED_CDS"/>
    <property type="molecule type" value="Genomic_DNA"/>
</dbReference>
<dbReference type="EMBL" id="BC132675">
    <property type="protein sequence ID" value="AAI32676.2"/>
    <property type="molecule type" value="mRNA"/>
</dbReference>
<dbReference type="CCDS" id="CCDS33004.1">
    <molecule id="Q96SR6-1"/>
</dbReference>
<dbReference type="CCDS" id="CCDS58659.1">
    <molecule id="Q96SR6-2"/>
</dbReference>
<dbReference type="RefSeq" id="NP_001243767.1">
    <molecule id="Q96SR6-2"/>
    <property type="nucleotide sequence ID" value="NM_001256838.2"/>
</dbReference>
<dbReference type="RefSeq" id="NP_001385419.1">
    <molecule id="Q96SR6-1"/>
    <property type="nucleotide sequence ID" value="NM_001398490.1"/>
</dbReference>
<dbReference type="RefSeq" id="NP_001385420.1">
    <molecule id="Q96SR6-1"/>
    <property type="nucleotide sequence ID" value="NM_001398491.1"/>
</dbReference>
<dbReference type="RefSeq" id="NP_001385421.1">
    <molecule id="Q96SR6-2"/>
    <property type="nucleotide sequence ID" value="NM_001398492.1"/>
</dbReference>
<dbReference type="RefSeq" id="NP_116214.2">
    <molecule id="Q96SR6-1"/>
    <property type="nucleotide sequence ID" value="NM_032825.5"/>
</dbReference>
<dbReference type="SMR" id="Q96SR6"/>
<dbReference type="BioGRID" id="124348">
    <property type="interactions" value="7"/>
</dbReference>
<dbReference type="FunCoup" id="Q96SR6">
    <property type="interactions" value="16"/>
</dbReference>
<dbReference type="IntAct" id="Q96SR6">
    <property type="interactions" value="7"/>
</dbReference>
<dbReference type="STRING" id="9606.ENSP00000292928"/>
<dbReference type="iPTMnet" id="Q96SR6"/>
<dbReference type="PhosphoSitePlus" id="Q96SR6"/>
<dbReference type="BioMuta" id="ZNF382"/>
<dbReference type="DMDM" id="313104256"/>
<dbReference type="jPOST" id="Q96SR6"/>
<dbReference type="MassIVE" id="Q96SR6"/>
<dbReference type="PaxDb" id="9606-ENSP00000292928"/>
<dbReference type="PeptideAtlas" id="Q96SR6"/>
<dbReference type="ProteomicsDB" id="78140">
    <molecule id="Q96SR6-1"/>
</dbReference>
<dbReference type="ProteomicsDB" id="78141">
    <molecule id="Q96SR6-2"/>
</dbReference>
<dbReference type="ProteomicsDB" id="78142">
    <molecule id="Q96SR6-3"/>
</dbReference>
<dbReference type="Antibodypedia" id="16319">
    <property type="antibodies" value="28 antibodies from 14 providers"/>
</dbReference>
<dbReference type="DNASU" id="84911"/>
<dbReference type="Ensembl" id="ENST00000292928.7">
    <molecule id="Q96SR6-1"/>
    <property type="protein sequence ID" value="ENSP00000292928.2"/>
    <property type="gene ID" value="ENSG00000161298.19"/>
</dbReference>
<dbReference type="Ensembl" id="ENST00000435416.1">
    <molecule id="Q96SR6-3"/>
    <property type="protein sequence ID" value="ENSP00000410113.1"/>
    <property type="gene ID" value="ENSG00000161298.19"/>
</dbReference>
<dbReference type="Ensembl" id="ENST00000439428.5">
    <molecule id="Q96SR6-2"/>
    <property type="protein sequence ID" value="ENSP00000407593.1"/>
    <property type="gene ID" value="ENSG00000161298.19"/>
</dbReference>
<dbReference type="GeneID" id="84911"/>
<dbReference type="KEGG" id="hsa:84911"/>
<dbReference type="MANE-Select" id="ENST00000292928.7">
    <property type="protein sequence ID" value="ENSP00000292928.2"/>
    <property type="RefSeq nucleotide sequence ID" value="NM_032825.5"/>
    <property type="RefSeq protein sequence ID" value="NP_116214.2"/>
</dbReference>
<dbReference type="UCSC" id="uc002oek.5">
    <molecule id="Q96SR6-1"/>
    <property type="organism name" value="human"/>
</dbReference>
<dbReference type="AGR" id="HGNC:17409"/>
<dbReference type="CTD" id="84911"/>
<dbReference type="DisGeNET" id="84911"/>
<dbReference type="GeneCards" id="ZNF382"/>
<dbReference type="HGNC" id="HGNC:17409">
    <property type="gene designation" value="ZNF382"/>
</dbReference>
<dbReference type="HPA" id="ENSG00000161298">
    <property type="expression patterns" value="Tissue enhanced (brain, retina)"/>
</dbReference>
<dbReference type="MIM" id="609516">
    <property type="type" value="gene"/>
</dbReference>
<dbReference type="neXtProt" id="NX_Q96SR6"/>
<dbReference type="OpenTargets" id="ENSG00000161298"/>
<dbReference type="PharmGKB" id="PA134869965"/>
<dbReference type="VEuPathDB" id="HostDB:ENSG00000161298"/>
<dbReference type="eggNOG" id="KOG1721">
    <property type="taxonomic scope" value="Eukaryota"/>
</dbReference>
<dbReference type="GeneTree" id="ENSGT00940000162338"/>
<dbReference type="HOGENOM" id="CLU_002678_44_5_1"/>
<dbReference type="InParanoid" id="Q96SR6"/>
<dbReference type="OMA" id="HKVETMR"/>
<dbReference type="OrthoDB" id="9651002at2759"/>
<dbReference type="PAN-GO" id="Q96SR6">
    <property type="GO annotations" value="3 GO annotations based on evolutionary models"/>
</dbReference>
<dbReference type="PhylomeDB" id="Q96SR6"/>
<dbReference type="TreeFam" id="TF337898"/>
<dbReference type="PathwayCommons" id="Q96SR6"/>
<dbReference type="Reactome" id="R-HSA-212436">
    <property type="pathway name" value="Generic Transcription Pathway"/>
</dbReference>
<dbReference type="Reactome" id="R-HSA-9843940">
    <property type="pathway name" value="Regulation of endogenous retroelements by KRAB-ZFP proteins"/>
</dbReference>
<dbReference type="SignaLink" id="Q96SR6"/>
<dbReference type="SIGNOR" id="Q96SR6"/>
<dbReference type="BioGRID-ORCS" id="84911">
    <property type="hits" value="182 hits in 1168 CRISPR screens"/>
</dbReference>
<dbReference type="ChiTaRS" id="ZNF382">
    <property type="organism name" value="human"/>
</dbReference>
<dbReference type="GenomeRNAi" id="84911"/>
<dbReference type="Pharos" id="Q96SR6">
    <property type="development level" value="Tbio"/>
</dbReference>
<dbReference type="PRO" id="PR:Q96SR6"/>
<dbReference type="Proteomes" id="UP000005640">
    <property type="component" value="Chromosome 19"/>
</dbReference>
<dbReference type="RNAct" id="Q96SR6">
    <property type="molecule type" value="protein"/>
</dbReference>
<dbReference type="Bgee" id="ENSG00000161298">
    <property type="expression patterns" value="Expressed in right hemisphere of cerebellum and 114 other cell types or tissues"/>
</dbReference>
<dbReference type="ExpressionAtlas" id="Q96SR6">
    <property type="expression patterns" value="baseline and differential"/>
</dbReference>
<dbReference type="GO" id="GO:0005634">
    <property type="term" value="C:nucleus"/>
    <property type="evidence" value="ECO:0007669"/>
    <property type="project" value="UniProtKB-SubCell"/>
</dbReference>
<dbReference type="GO" id="GO:0003700">
    <property type="term" value="F:DNA-binding transcription factor activity"/>
    <property type="evidence" value="ECO:0000318"/>
    <property type="project" value="GO_Central"/>
</dbReference>
<dbReference type="GO" id="GO:0000978">
    <property type="term" value="F:RNA polymerase II cis-regulatory region sequence-specific DNA binding"/>
    <property type="evidence" value="ECO:0000318"/>
    <property type="project" value="GO_Central"/>
</dbReference>
<dbReference type="GO" id="GO:0008270">
    <property type="term" value="F:zinc ion binding"/>
    <property type="evidence" value="ECO:0007669"/>
    <property type="project" value="UniProtKB-KW"/>
</dbReference>
<dbReference type="GO" id="GO:0006357">
    <property type="term" value="P:regulation of transcription by RNA polymerase II"/>
    <property type="evidence" value="ECO:0000318"/>
    <property type="project" value="GO_Central"/>
</dbReference>
<dbReference type="CDD" id="cd07765">
    <property type="entry name" value="KRAB_A-box"/>
    <property type="match status" value="1"/>
</dbReference>
<dbReference type="FunFam" id="3.30.160.60:FF:004137">
    <property type="match status" value="1"/>
</dbReference>
<dbReference type="FunFam" id="3.30.160.60:FF:000029">
    <property type="entry name" value="GLI family zinc finger 4"/>
    <property type="match status" value="1"/>
</dbReference>
<dbReference type="FunFam" id="3.30.160.60:FF:000155">
    <property type="entry name" value="zinc finger protein 133 isoform X1"/>
    <property type="match status" value="1"/>
</dbReference>
<dbReference type="FunFam" id="3.30.160.60:FF:002343">
    <property type="entry name" value="Zinc finger protein 33A"/>
    <property type="match status" value="1"/>
</dbReference>
<dbReference type="FunFam" id="3.30.160.60:FF:002402">
    <property type="entry name" value="Zinc finger protein 347"/>
    <property type="match status" value="1"/>
</dbReference>
<dbReference type="FunFam" id="3.30.160.60:FF:002118">
    <property type="entry name" value="Zinc finger protein 382"/>
    <property type="match status" value="1"/>
</dbReference>
<dbReference type="FunFam" id="3.30.160.60:FF:002220">
    <property type="entry name" value="Zinc finger protein 382"/>
    <property type="match status" value="1"/>
</dbReference>
<dbReference type="FunFam" id="3.30.160.60:FF:000212">
    <property type="entry name" value="zinc finger protein 382 isoform X2"/>
    <property type="match status" value="2"/>
</dbReference>
<dbReference type="FunFam" id="3.30.160.60:FF:001053">
    <property type="entry name" value="zinc finger protein 382 isoform X2"/>
    <property type="match status" value="1"/>
</dbReference>
<dbReference type="FunFam" id="3.30.160.60:FF:000200">
    <property type="entry name" value="zinc finger protein 510 isoform X2"/>
    <property type="match status" value="1"/>
</dbReference>
<dbReference type="Gene3D" id="6.10.140.140">
    <property type="match status" value="1"/>
</dbReference>
<dbReference type="Gene3D" id="3.30.160.60">
    <property type="entry name" value="Classic Zinc Finger"/>
    <property type="match status" value="10"/>
</dbReference>
<dbReference type="InterPro" id="IPR001909">
    <property type="entry name" value="KRAB"/>
</dbReference>
<dbReference type="InterPro" id="IPR036051">
    <property type="entry name" value="KRAB_dom_sf"/>
</dbReference>
<dbReference type="InterPro" id="IPR036236">
    <property type="entry name" value="Znf_C2H2_sf"/>
</dbReference>
<dbReference type="InterPro" id="IPR013087">
    <property type="entry name" value="Znf_C2H2_type"/>
</dbReference>
<dbReference type="PANTHER" id="PTHR24393:SF106">
    <property type="entry name" value="ZINC FINGER AND SCAN DOMAIN-CONTAINING PROTEIN 2"/>
    <property type="match status" value="1"/>
</dbReference>
<dbReference type="PANTHER" id="PTHR24393">
    <property type="entry name" value="ZINC FINGER PROTEIN"/>
    <property type="match status" value="1"/>
</dbReference>
<dbReference type="Pfam" id="PF01352">
    <property type="entry name" value="KRAB"/>
    <property type="match status" value="1"/>
</dbReference>
<dbReference type="Pfam" id="PF00096">
    <property type="entry name" value="zf-C2H2"/>
    <property type="match status" value="9"/>
</dbReference>
<dbReference type="SMART" id="SM00349">
    <property type="entry name" value="KRAB"/>
    <property type="match status" value="1"/>
</dbReference>
<dbReference type="SMART" id="SM00355">
    <property type="entry name" value="ZnF_C2H2"/>
    <property type="match status" value="10"/>
</dbReference>
<dbReference type="SUPFAM" id="SSF57667">
    <property type="entry name" value="beta-beta-alpha zinc fingers"/>
    <property type="match status" value="7"/>
</dbReference>
<dbReference type="SUPFAM" id="SSF109640">
    <property type="entry name" value="KRAB domain (Kruppel-associated box)"/>
    <property type="match status" value="1"/>
</dbReference>
<dbReference type="PROSITE" id="PS50805">
    <property type="entry name" value="KRAB"/>
    <property type="match status" value="1"/>
</dbReference>
<dbReference type="PROSITE" id="PS00028">
    <property type="entry name" value="ZINC_FINGER_C2H2_1"/>
    <property type="match status" value="9"/>
</dbReference>
<dbReference type="PROSITE" id="PS50157">
    <property type="entry name" value="ZINC_FINGER_C2H2_2"/>
    <property type="match status" value="10"/>
</dbReference>
<comment type="function">
    <text evidence="1">Functions as a sequence-specific transcriptional repressor.</text>
</comment>
<comment type="subunit">
    <text evidence="1">Interacts with TRIM28; enhances the transcriptional repressor activity.</text>
</comment>
<comment type="subcellular location">
    <subcellularLocation>
        <location evidence="1">Nucleus</location>
    </subcellularLocation>
</comment>
<comment type="alternative products">
    <event type="alternative splicing"/>
    <isoform>
        <id>Q96SR6-1</id>
        <name>1</name>
        <sequence type="displayed"/>
    </isoform>
    <isoform>
        <id>Q96SR6-2</id>
        <name>2</name>
        <sequence type="described" ref="VSP_036224"/>
    </isoform>
    <isoform>
        <id>Q96SR6-3</id>
        <name>3</name>
        <sequence type="described" ref="VSP_036225"/>
    </isoform>
</comment>
<comment type="tissue specificity">
    <text evidence="4">Specifically expressed in heart with a weaker expression also detected in skeletal muscle.</text>
</comment>
<comment type="developmental stage">
    <text evidence="4">Primarily detected in 34 day-old embryos. Widely expressed at different levels during embryonic development where it is predominantly expressed in cerebellum, kidney, and cerebrum and to a lesser extent in lung, heart, skeletal muscle, tongue, and adrenal gland.</text>
</comment>
<comment type="similarity">
    <text evidence="9">Belongs to the krueppel C2H2-type zinc-finger protein family.</text>
</comment>
<organism>
    <name type="scientific">Homo sapiens</name>
    <name type="common">Human</name>
    <dbReference type="NCBI Taxonomy" id="9606"/>
    <lineage>
        <taxon>Eukaryota</taxon>
        <taxon>Metazoa</taxon>
        <taxon>Chordata</taxon>
        <taxon>Craniata</taxon>
        <taxon>Vertebrata</taxon>
        <taxon>Euteleostomi</taxon>
        <taxon>Mammalia</taxon>
        <taxon>Eutheria</taxon>
        <taxon>Euarchontoglires</taxon>
        <taxon>Primates</taxon>
        <taxon>Haplorrhini</taxon>
        <taxon>Catarrhini</taxon>
        <taxon>Hominidae</taxon>
        <taxon>Homo</taxon>
    </lineage>
</organism>
<reference key="1">
    <citation type="journal article" date="2002" name="Biochem. Biophys. Res. Commun.">
        <title>Expression of a novel Kruppel-like zinc-finger gene, ZNF382, in human heart.</title>
        <authorList>
            <person name="Luo K."/>
            <person name="Yuan W."/>
            <person name="Zhu C."/>
            <person name="Li Y."/>
            <person name="Wang Y."/>
            <person name="Zeng W."/>
            <person name="Jiao W."/>
            <person name="Liu M."/>
            <person name="Wu X."/>
        </authorList>
    </citation>
    <scope>NUCLEOTIDE SEQUENCE [MRNA] (ISOFORM 1)</scope>
    <scope>TISSUE SPECIFICITY</scope>
    <scope>DEVELOPMENTAL STAGE</scope>
    <source>
        <tissue>Embryonic heart</tissue>
    </source>
</reference>
<reference key="2">
    <citation type="submission" date="2003-01" db="EMBL/GenBank/DDBJ databases">
        <authorList>
            <person name="Urrutia R."/>
            <person name="Folch-Puy E."/>
            <person name="Fernandez-Zapico M."/>
        </authorList>
    </citation>
    <scope>NUCLEOTIDE SEQUENCE [MRNA] (ISOFORM 1)</scope>
</reference>
<reference key="3">
    <citation type="journal article" date="2004" name="Nat. Genet.">
        <title>Complete sequencing and characterization of 21,243 full-length human cDNAs.</title>
        <authorList>
            <person name="Ota T."/>
            <person name="Suzuki Y."/>
            <person name="Nishikawa T."/>
            <person name="Otsuki T."/>
            <person name="Sugiyama T."/>
            <person name="Irie R."/>
            <person name="Wakamatsu A."/>
            <person name="Hayashi K."/>
            <person name="Sato H."/>
            <person name="Nagai K."/>
            <person name="Kimura K."/>
            <person name="Makita H."/>
            <person name="Sekine M."/>
            <person name="Obayashi M."/>
            <person name="Nishi T."/>
            <person name="Shibahara T."/>
            <person name="Tanaka T."/>
            <person name="Ishii S."/>
            <person name="Yamamoto J."/>
            <person name="Saito K."/>
            <person name="Kawai Y."/>
            <person name="Isono Y."/>
            <person name="Nakamura Y."/>
            <person name="Nagahari K."/>
            <person name="Murakami K."/>
            <person name="Yasuda T."/>
            <person name="Iwayanagi T."/>
            <person name="Wagatsuma M."/>
            <person name="Shiratori A."/>
            <person name="Sudo H."/>
            <person name="Hosoiri T."/>
            <person name="Kaku Y."/>
            <person name="Kodaira H."/>
            <person name="Kondo H."/>
            <person name="Sugawara M."/>
            <person name="Takahashi M."/>
            <person name="Kanda K."/>
            <person name="Yokoi T."/>
            <person name="Furuya T."/>
            <person name="Kikkawa E."/>
            <person name="Omura Y."/>
            <person name="Abe K."/>
            <person name="Kamihara K."/>
            <person name="Katsuta N."/>
            <person name="Sato K."/>
            <person name="Tanikawa M."/>
            <person name="Yamazaki M."/>
            <person name="Ninomiya K."/>
            <person name="Ishibashi T."/>
            <person name="Yamashita H."/>
            <person name="Murakawa K."/>
            <person name="Fujimori K."/>
            <person name="Tanai H."/>
            <person name="Kimata M."/>
            <person name="Watanabe M."/>
            <person name="Hiraoka S."/>
            <person name="Chiba Y."/>
            <person name="Ishida S."/>
            <person name="Ono Y."/>
            <person name="Takiguchi S."/>
            <person name="Watanabe S."/>
            <person name="Yosida M."/>
            <person name="Hotuta T."/>
            <person name="Kusano J."/>
            <person name="Kanehori K."/>
            <person name="Takahashi-Fujii A."/>
            <person name="Hara H."/>
            <person name="Tanase T.-O."/>
            <person name="Nomura Y."/>
            <person name="Togiya S."/>
            <person name="Komai F."/>
            <person name="Hara R."/>
            <person name="Takeuchi K."/>
            <person name="Arita M."/>
            <person name="Imose N."/>
            <person name="Musashino K."/>
            <person name="Yuuki H."/>
            <person name="Oshima A."/>
            <person name="Sasaki N."/>
            <person name="Aotsuka S."/>
            <person name="Yoshikawa Y."/>
            <person name="Matsunawa H."/>
            <person name="Ichihara T."/>
            <person name="Shiohata N."/>
            <person name="Sano S."/>
            <person name="Moriya S."/>
            <person name="Momiyama H."/>
            <person name="Satoh N."/>
            <person name="Takami S."/>
            <person name="Terashima Y."/>
            <person name="Suzuki O."/>
            <person name="Nakagawa S."/>
            <person name="Senoh A."/>
            <person name="Mizoguchi H."/>
            <person name="Goto Y."/>
            <person name="Shimizu F."/>
            <person name="Wakebe H."/>
            <person name="Hishigaki H."/>
            <person name="Watanabe T."/>
            <person name="Sugiyama A."/>
            <person name="Takemoto M."/>
            <person name="Kawakami B."/>
            <person name="Yamazaki M."/>
            <person name="Watanabe K."/>
            <person name="Kumagai A."/>
            <person name="Itakura S."/>
            <person name="Fukuzumi Y."/>
            <person name="Fujimori Y."/>
            <person name="Komiyama M."/>
            <person name="Tashiro H."/>
            <person name="Tanigami A."/>
            <person name="Fujiwara T."/>
            <person name="Ono T."/>
            <person name="Yamada K."/>
            <person name="Fujii Y."/>
            <person name="Ozaki K."/>
            <person name="Hirao M."/>
            <person name="Ohmori Y."/>
            <person name="Kawabata A."/>
            <person name="Hikiji T."/>
            <person name="Kobatake N."/>
            <person name="Inagaki H."/>
            <person name="Ikema Y."/>
            <person name="Okamoto S."/>
            <person name="Okitani R."/>
            <person name="Kawakami T."/>
            <person name="Noguchi S."/>
            <person name="Itoh T."/>
            <person name="Shigeta K."/>
            <person name="Senba T."/>
            <person name="Matsumura K."/>
            <person name="Nakajima Y."/>
            <person name="Mizuno T."/>
            <person name="Morinaga M."/>
            <person name="Sasaki M."/>
            <person name="Togashi T."/>
            <person name="Oyama M."/>
            <person name="Hata H."/>
            <person name="Watanabe M."/>
            <person name="Komatsu T."/>
            <person name="Mizushima-Sugano J."/>
            <person name="Satoh T."/>
            <person name="Shirai Y."/>
            <person name="Takahashi Y."/>
            <person name="Nakagawa K."/>
            <person name="Okumura K."/>
            <person name="Nagase T."/>
            <person name="Nomura N."/>
            <person name="Kikuchi H."/>
            <person name="Masuho Y."/>
            <person name="Yamashita R."/>
            <person name="Nakai K."/>
            <person name="Yada T."/>
            <person name="Nakamura Y."/>
            <person name="Ohara O."/>
            <person name="Isogai T."/>
            <person name="Sugano S."/>
        </authorList>
    </citation>
    <scope>NUCLEOTIDE SEQUENCE [LARGE SCALE MRNA] (ISOFORM 1)</scope>
    <source>
        <tissue>Teratocarcinoma</tissue>
    </source>
</reference>
<reference key="4">
    <citation type="journal article" date="2007" name="BMC Genomics">
        <title>The full-ORF clone resource of the German cDNA consortium.</title>
        <authorList>
            <person name="Bechtel S."/>
            <person name="Rosenfelder H."/>
            <person name="Duda A."/>
            <person name="Schmidt C.P."/>
            <person name="Ernst U."/>
            <person name="Wellenreuther R."/>
            <person name="Mehrle A."/>
            <person name="Schuster C."/>
            <person name="Bahr A."/>
            <person name="Bloecker H."/>
            <person name="Heubner D."/>
            <person name="Hoerlein A."/>
            <person name="Michel G."/>
            <person name="Wedler H."/>
            <person name="Koehrer K."/>
            <person name="Ottenwaelder B."/>
            <person name="Poustka A."/>
            <person name="Wiemann S."/>
            <person name="Schupp I."/>
        </authorList>
    </citation>
    <scope>NUCLEOTIDE SEQUENCE [LARGE SCALE MRNA] (ISOFORM 3)</scope>
    <scope>VARIANT GLY-168</scope>
    <source>
        <tissue>Lymph node</tissue>
    </source>
</reference>
<reference key="5">
    <citation type="journal article" date="2004" name="Nature">
        <title>The DNA sequence and biology of human chromosome 19.</title>
        <authorList>
            <person name="Grimwood J."/>
            <person name="Gordon L.A."/>
            <person name="Olsen A.S."/>
            <person name="Terry A."/>
            <person name="Schmutz J."/>
            <person name="Lamerdin J.E."/>
            <person name="Hellsten U."/>
            <person name="Goodstein D."/>
            <person name="Couronne O."/>
            <person name="Tran-Gyamfi M."/>
            <person name="Aerts A."/>
            <person name="Altherr M."/>
            <person name="Ashworth L."/>
            <person name="Bajorek E."/>
            <person name="Black S."/>
            <person name="Branscomb E."/>
            <person name="Caenepeel S."/>
            <person name="Carrano A.V."/>
            <person name="Caoile C."/>
            <person name="Chan Y.M."/>
            <person name="Christensen M."/>
            <person name="Cleland C.A."/>
            <person name="Copeland A."/>
            <person name="Dalin E."/>
            <person name="Dehal P."/>
            <person name="Denys M."/>
            <person name="Detter J.C."/>
            <person name="Escobar J."/>
            <person name="Flowers D."/>
            <person name="Fotopulos D."/>
            <person name="Garcia C."/>
            <person name="Georgescu A.M."/>
            <person name="Glavina T."/>
            <person name="Gomez M."/>
            <person name="Gonzales E."/>
            <person name="Groza M."/>
            <person name="Hammon N."/>
            <person name="Hawkins T."/>
            <person name="Haydu L."/>
            <person name="Ho I."/>
            <person name="Huang W."/>
            <person name="Israni S."/>
            <person name="Jett J."/>
            <person name="Kadner K."/>
            <person name="Kimball H."/>
            <person name="Kobayashi A."/>
            <person name="Larionov V."/>
            <person name="Leem S.-H."/>
            <person name="Lopez F."/>
            <person name="Lou Y."/>
            <person name="Lowry S."/>
            <person name="Malfatti S."/>
            <person name="Martinez D."/>
            <person name="McCready P.M."/>
            <person name="Medina C."/>
            <person name="Morgan J."/>
            <person name="Nelson K."/>
            <person name="Nolan M."/>
            <person name="Ovcharenko I."/>
            <person name="Pitluck S."/>
            <person name="Pollard M."/>
            <person name="Popkie A.P."/>
            <person name="Predki P."/>
            <person name="Quan G."/>
            <person name="Ramirez L."/>
            <person name="Rash S."/>
            <person name="Retterer J."/>
            <person name="Rodriguez A."/>
            <person name="Rogers S."/>
            <person name="Salamov A."/>
            <person name="Salazar A."/>
            <person name="She X."/>
            <person name="Smith D."/>
            <person name="Slezak T."/>
            <person name="Solovyev V."/>
            <person name="Thayer N."/>
            <person name="Tice H."/>
            <person name="Tsai M."/>
            <person name="Ustaszewska A."/>
            <person name="Vo N."/>
            <person name="Wagner M."/>
            <person name="Wheeler J."/>
            <person name="Wu K."/>
            <person name="Xie G."/>
            <person name="Yang J."/>
            <person name="Dubchak I."/>
            <person name="Furey T.S."/>
            <person name="DeJong P."/>
            <person name="Dickson M."/>
            <person name="Gordon D."/>
            <person name="Eichler E.E."/>
            <person name="Pennacchio L.A."/>
            <person name="Richardson P."/>
            <person name="Stubbs L."/>
            <person name="Rokhsar D.S."/>
            <person name="Myers R.M."/>
            <person name="Rubin E.M."/>
            <person name="Lucas S.M."/>
        </authorList>
    </citation>
    <scope>NUCLEOTIDE SEQUENCE [LARGE SCALE GENOMIC DNA]</scope>
</reference>
<reference key="6">
    <citation type="journal article" date="2004" name="Genome Res.">
        <title>The status, quality, and expansion of the NIH full-length cDNA project: the Mammalian Gene Collection (MGC).</title>
        <authorList>
            <consortium name="The MGC Project Team"/>
        </authorList>
    </citation>
    <scope>NUCLEOTIDE SEQUENCE [LARGE SCALE MRNA] (ISOFORM 2)</scope>
    <scope>VARIANT GLY-168</scope>
    <source>
        <tissue>Brain</tissue>
    </source>
</reference>
<accession>Q96SR6</accession>
<accession>A3KMP6</accession>
<accession>A8MT55</accession>
<accession>C9K0V5</accession>
<accession>Q53ZY8</accession>
<accession>Q5JPJ2</accession>
<protein>
    <recommendedName>
        <fullName>Zinc finger protein 382</fullName>
    </recommendedName>
    <alternativeName>
        <fullName>KRAB/zinc finger suppressor protein 1</fullName>
        <shortName>KS1</shortName>
    </alternativeName>
    <alternativeName>
        <fullName>Multiple zinc finger and krueppel-associated box protein KS1</fullName>
    </alternativeName>
</protein>
<sequence>MPLQGSVSFKDVTVDFTQEEWQQLDPAQKALYRDVMLENYCHFVSVGFHMAKPDMIRKLEQGEELWTQRIFPSYSYLEEDGKTEDVLVKFKEYQDRHSRPLIFINHKKLIKERSNIYGKTFTLGKNRISKTILCEYKPDGKVLKNISELVIRNISPIKEKFGDSTGWEKSLLNTKHEKIHPAVNLHKQTERVLSGKQELIQHQKVQAPEQPFDHNECEKSFLMKGMLFTHTRAHRGERTFEYNKDGIAFIEKSSLSVHPSNLMEKKPSAYNKYGKFLCRKPVFIMPQRPQTEEKPFHCPYCGNNFRRKSYLIEHQRIHTGEKPYVCNQCGKAFRQKTALTLHEKTHIEGKPFICIDCGKSFRQKATLTRHHKTHTGEKAYECPQCGSAFRKKSYLIDHQRTHTGEKPYQCNECGKAFIQKTTLTVHQRTHTGEKPYICNECGKSFCQKTTLTLHQRIHTGEKPYICNECGKSFRQKAILTVHHRIHTGEKSNGCPQCGKAFSRKSNLIRHQKTHTGEKPYECKQCGKFFSCKSNLIVHQKTHKVETTGIQ</sequence>
<feature type="chain" id="PRO_0000047549" description="Zinc finger protein 382">
    <location>
        <begin position="1"/>
        <end position="550"/>
    </location>
</feature>
<feature type="domain" description="KRAB" evidence="3">
    <location>
        <begin position="7"/>
        <end position="78"/>
    </location>
</feature>
<feature type="zinc finger region" description="C2H2-type 1; degenerate" evidence="2">
    <location>
        <begin position="212"/>
        <end position="234"/>
    </location>
</feature>
<feature type="zinc finger region" description="C2H2-type 2" evidence="2">
    <location>
        <begin position="296"/>
        <end position="318"/>
    </location>
</feature>
<feature type="zinc finger region" description="C2H2-type 3" evidence="2">
    <location>
        <begin position="324"/>
        <end position="346"/>
    </location>
</feature>
<feature type="zinc finger region" description="C2H2-type 4" evidence="2">
    <location>
        <begin position="352"/>
        <end position="374"/>
    </location>
</feature>
<feature type="zinc finger region" description="C2H2-type 5" evidence="2">
    <location>
        <begin position="380"/>
        <end position="402"/>
    </location>
</feature>
<feature type="zinc finger region" description="C2H2-type 6" evidence="2">
    <location>
        <begin position="408"/>
        <end position="430"/>
    </location>
</feature>
<feature type="zinc finger region" description="C2H2-type 7" evidence="2">
    <location>
        <begin position="436"/>
        <end position="458"/>
    </location>
</feature>
<feature type="zinc finger region" description="C2H2-type 8" evidence="2">
    <location>
        <begin position="464"/>
        <end position="486"/>
    </location>
</feature>
<feature type="zinc finger region" description="C2H2-type 9" evidence="2">
    <location>
        <begin position="492"/>
        <end position="514"/>
    </location>
</feature>
<feature type="zinc finger region" description="C2H2-type 10" evidence="2">
    <location>
        <begin position="520"/>
        <end position="542"/>
    </location>
</feature>
<feature type="region of interest" description="Mediates interaction with TRIM28" evidence="1">
    <location>
        <begin position="1"/>
        <end position="105"/>
    </location>
</feature>
<feature type="region of interest" description="Represses transcription" evidence="1">
    <location>
        <begin position="5"/>
        <end position="46"/>
    </location>
</feature>
<feature type="region of interest" description="Represses transcription" evidence="1">
    <location>
        <begin position="70"/>
        <end position="211"/>
    </location>
</feature>
<feature type="region of interest" description="Required for transcriptional repression activity; probably mediates sequence-specific DNA-binding" evidence="1">
    <location>
        <begin position="296"/>
        <end position="550"/>
    </location>
</feature>
<feature type="splice variant" id="VSP_036224" description="In isoform 2." evidence="7">
    <original>MPL</original>
    <variation>MS</variation>
    <location>
        <begin position="1"/>
        <end position="3"/>
    </location>
</feature>
<feature type="splice variant" id="VSP_036225" description="In isoform 3." evidence="8">
    <location>
        <position position="78"/>
    </location>
</feature>
<feature type="sequence variant" id="VAR_054226" description="In dbSNP:rs3108171." evidence="5 6">
    <original>E</original>
    <variation>G</variation>
    <location>
        <position position="168"/>
    </location>
</feature>
<feature type="sequence conflict" description="In Ref. 1; AAM48246, 2; AAO72308 and 3; BAB55217." evidence="9" ref="1 2 3">
    <location>
        <begin position="129"/>
        <end position="130"/>
    </location>
</feature>
<feature type="sequence conflict" description="In Ref. 6; AAI32676." evidence="9" ref="6">
    <original>T</original>
    <variation>M</variation>
    <location>
        <position position="547"/>
    </location>
</feature>
<gene>
    <name type="primary">ZNF382</name>
</gene>
<evidence type="ECO:0000250" key="1"/>
<evidence type="ECO:0000255" key="2">
    <source>
        <dbReference type="PROSITE-ProRule" id="PRU00042"/>
    </source>
</evidence>
<evidence type="ECO:0000255" key="3">
    <source>
        <dbReference type="PROSITE-ProRule" id="PRU00119"/>
    </source>
</evidence>
<evidence type="ECO:0000269" key="4">
    <source>
    </source>
</evidence>
<evidence type="ECO:0000269" key="5">
    <source>
    </source>
</evidence>
<evidence type="ECO:0000269" key="6">
    <source>
    </source>
</evidence>
<evidence type="ECO:0000303" key="7">
    <source>
    </source>
</evidence>
<evidence type="ECO:0000303" key="8">
    <source>
    </source>
</evidence>
<evidence type="ECO:0000305" key="9"/>
<keyword id="KW-0025">Alternative splicing</keyword>
<keyword id="KW-0238">DNA-binding</keyword>
<keyword id="KW-0479">Metal-binding</keyword>
<keyword id="KW-0539">Nucleus</keyword>
<keyword id="KW-1267">Proteomics identification</keyword>
<keyword id="KW-1185">Reference proteome</keyword>
<keyword id="KW-0677">Repeat</keyword>
<keyword id="KW-0678">Repressor</keyword>
<keyword id="KW-0804">Transcription</keyword>
<keyword id="KW-0805">Transcription regulation</keyword>
<keyword id="KW-0862">Zinc</keyword>
<keyword id="KW-0863">Zinc-finger</keyword>
<name>ZN382_HUMAN</name>
<proteinExistence type="evidence at protein level"/>